<comment type="function">
    <text evidence="1">Catalyzes the addition and repair of the essential 3'-terminal CCA sequence in tRNAs without using a nucleic acid template. Adds these three nucleotides in the order of C, C, and A to the tRNA nucleotide-73, using CTP and ATP as substrates and producing inorganic pyrophosphate. tRNA 3'-terminal CCA addition is required both for tRNA processing and repair. Also involved in tRNA surveillance by mediating tandem CCA addition to generate a CCACCA at the 3' terminus of unstable tRNAs. While stable tRNAs receive only 3'-terminal CCA, unstable tRNAs are marked with CCACCA and rapidly degraded.</text>
</comment>
<comment type="catalytic activity">
    <reaction evidence="1">
        <text>a tRNA precursor + 2 CTP + ATP = a tRNA with a 3' CCA end + 3 diphosphate</text>
        <dbReference type="Rhea" id="RHEA:14433"/>
        <dbReference type="Rhea" id="RHEA-COMP:10465"/>
        <dbReference type="Rhea" id="RHEA-COMP:10468"/>
        <dbReference type="ChEBI" id="CHEBI:30616"/>
        <dbReference type="ChEBI" id="CHEBI:33019"/>
        <dbReference type="ChEBI" id="CHEBI:37563"/>
        <dbReference type="ChEBI" id="CHEBI:74896"/>
        <dbReference type="ChEBI" id="CHEBI:83071"/>
        <dbReference type="EC" id="2.7.7.72"/>
    </reaction>
</comment>
<comment type="catalytic activity">
    <reaction evidence="1">
        <text>a tRNA with a 3' CCA end + 2 CTP + ATP = a tRNA with a 3' CCACCA end + 3 diphosphate</text>
        <dbReference type="Rhea" id="RHEA:76235"/>
        <dbReference type="Rhea" id="RHEA-COMP:10468"/>
        <dbReference type="Rhea" id="RHEA-COMP:18655"/>
        <dbReference type="ChEBI" id="CHEBI:30616"/>
        <dbReference type="ChEBI" id="CHEBI:33019"/>
        <dbReference type="ChEBI" id="CHEBI:37563"/>
        <dbReference type="ChEBI" id="CHEBI:83071"/>
        <dbReference type="ChEBI" id="CHEBI:195187"/>
    </reaction>
    <physiologicalReaction direction="left-to-right" evidence="1">
        <dbReference type="Rhea" id="RHEA:76236"/>
    </physiologicalReaction>
</comment>
<comment type="cofactor">
    <cofactor evidence="1">
        <name>Mg(2+)</name>
        <dbReference type="ChEBI" id="CHEBI:18420"/>
    </cofactor>
    <text evidence="1">Magnesium is required for nucleotidyltransferase activity.</text>
</comment>
<comment type="cofactor">
    <cofactor evidence="1">
        <name>Ni(2+)</name>
        <dbReference type="ChEBI" id="CHEBI:49786"/>
    </cofactor>
    <text evidence="1">Nickel for phosphatase activity.</text>
</comment>
<comment type="subunit">
    <text evidence="1">Monomer. Can also form homodimers and oligomers.</text>
</comment>
<comment type="domain">
    <text evidence="1">Comprises two domains: an N-terminal domain containing the nucleotidyltransferase activity and a C-terminal HD domain associated with both phosphodiesterase and phosphatase activities.</text>
</comment>
<comment type="miscellaneous">
    <text evidence="1">A single active site specifically recognizes both ATP and CTP and is responsible for their addition.</text>
</comment>
<comment type="similarity">
    <text evidence="1">Belongs to the tRNA nucleotidyltransferase/poly(A) polymerase family. Bacterial CCA-adding enzyme type 1 subfamily.</text>
</comment>
<proteinExistence type="inferred from homology"/>
<organism>
    <name type="scientific">Teredinibacter turnerae (strain ATCC 39867 / T7901)</name>
    <dbReference type="NCBI Taxonomy" id="377629"/>
    <lineage>
        <taxon>Bacteria</taxon>
        <taxon>Pseudomonadati</taxon>
        <taxon>Pseudomonadota</taxon>
        <taxon>Gammaproteobacteria</taxon>
        <taxon>Cellvibrionales</taxon>
        <taxon>Cellvibrionaceae</taxon>
        <taxon>Teredinibacter</taxon>
    </lineage>
</organism>
<name>CCA_TERTT</name>
<evidence type="ECO:0000255" key="1">
    <source>
        <dbReference type="HAMAP-Rule" id="MF_01261"/>
    </source>
</evidence>
<dbReference type="EC" id="2.7.7.72" evidence="1"/>
<dbReference type="EC" id="3.1.3.-" evidence="1"/>
<dbReference type="EC" id="3.1.4.-" evidence="1"/>
<dbReference type="EMBL" id="CP001614">
    <property type="protein sequence ID" value="ACR14324.1"/>
    <property type="molecule type" value="Genomic_DNA"/>
</dbReference>
<dbReference type="RefSeq" id="WP_015820440.1">
    <property type="nucleotide sequence ID" value="NC_012997.1"/>
</dbReference>
<dbReference type="SMR" id="C5BPQ5"/>
<dbReference type="STRING" id="377629.TERTU_3154"/>
<dbReference type="KEGG" id="ttu:TERTU_3154"/>
<dbReference type="eggNOG" id="COG0617">
    <property type="taxonomic scope" value="Bacteria"/>
</dbReference>
<dbReference type="HOGENOM" id="CLU_015961_1_1_6"/>
<dbReference type="OrthoDB" id="9805698at2"/>
<dbReference type="Proteomes" id="UP000009080">
    <property type="component" value="Chromosome"/>
</dbReference>
<dbReference type="GO" id="GO:0005524">
    <property type="term" value="F:ATP binding"/>
    <property type="evidence" value="ECO:0007669"/>
    <property type="project" value="UniProtKB-UniRule"/>
</dbReference>
<dbReference type="GO" id="GO:0004810">
    <property type="term" value="F:CCA tRNA nucleotidyltransferase activity"/>
    <property type="evidence" value="ECO:0007669"/>
    <property type="project" value="UniProtKB-UniRule"/>
</dbReference>
<dbReference type="GO" id="GO:0004112">
    <property type="term" value="F:cyclic-nucleotide phosphodiesterase activity"/>
    <property type="evidence" value="ECO:0007669"/>
    <property type="project" value="UniProtKB-UniRule"/>
</dbReference>
<dbReference type="GO" id="GO:0000287">
    <property type="term" value="F:magnesium ion binding"/>
    <property type="evidence" value="ECO:0007669"/>
    <property type="project" value="UniProtKB-UniRule"/>
</dbReference>
<dbReference type="GO" id="GO:0016791">
    <property type="term" value="F:phosphatase activity"/>
    <property type="evidence" value="ECO:0007669"/>
    <property type="project" value="UniProtKB-UniRule"/>
</dbReference>
<dbReference type="GO" id="GO:0000049">
    <property type="term" value="F:tRNA binding"/>
    <property type="evidence" value="ECO:0007669"/>
    <property type="project" value="UniProtKB-UniRule"/>
</dbReference>
<dbReference type="GO" id="GO:0042245">
    <property type="term" value="P:RNA repair"/>
    <property type="evidence" value="ECO:0007669"/>
    <property type="project" value="UniProtKB-KW"/>
</dbReference>
<dbReference type="GO" id="GO:0001680">
    <property type="term" value="P:tRNA 3'-terminal CCA addition"/>
    <property type="evidence" value="ECO:0007669"/>
    <property type="project" value="UniProtKB-UniRule"/>
</dbReference>
<dbReference type="CDD" id="cd00077">
    <property type="entry name" value="HDc"/>
    <property type="match status" value="1"/>
</dbReference>
<dbReference type="CDD" id="cd05398">
    <property type="entry name" value="NT_ClassII-CCAase"/>
    <property type="match status" value="1"/>
</dbReference>
<dbReference type="Gene3D" id="3.30.460.10">
    <property type="entry name" value="Beta Polymerase, domain 2"/>
    <property type="match status" value="1"/>
</dbReference>
<dbReference type="Gene3D" id="1.10.3090.10">
    <property type="entry name" value="cca-adding enzyme, domain 2"/>
    <property type="match status" value="1"/>
</dbReference>
<dbReference type="HAMAP" id="MF_01261">
    <property type="entry name" value="CCA_bact_type1"/>
    <property type="match status" value="1"/>
</dbReference>
<dbReference type="HAMAP" id="MF_01262">
    <property type="entry name" value="CCA_bact_type2"/>
    <property type="match status" value="1"/>
</dbReference>
<dbReference type="InterPro" id="IPR012006">
    <property type="entry name" value="CCA_bact"/>
</dbReference>
<dbReference type="InterPro" id="IPR003607">
    <property type="entry name" value="HD/PDEase_dom"/>
</dbReference>
<dbReference type="InterPro" id="IPR006674">
    <property type="entry name" value="HD_domain"/>
</dbReference>
<dbReference type="InterPro" id="IPR043519">
    <property type="entry name" value="NT_sf"/>
</dbReference>
<dbReference type="InterPro" id="IPR002646">
    <property type="entry name" value="PolA_pol_head_dom"/>
</dbReference>
<dbReference type="InterPro" id="IPR032828">
    <property type="entry name" value="PolyA_RNA-bd"/>
</dbReference>
<dbReference type="InterPro" id="IPR050124">
    <property type="entry name" value="tRNA_CCA-adding_enzyme"/>
</dbReference>
<dbReference type="NCBIfam" id="NF008137">
    <property type="entry name" value="PRK10885.1"/>
    <property type="match status" value="1"/>
</dbReference>
<dbReference type="PANTHER" id="PTHR47545">
    <property type="entry name" value="MULTIFUNCTIONAL CCA PROTEIN"/>
    <property type="match status" value="1"/>
</dbReference>
<dbReference type="PANTHER" id="PTHR47545:SF1">
    <property type="entry name" value="MULTIFUNCTIONAL CCA PROTEIN"/>
    <property type="match status" value="1"/>
</dbReference>
<dbReference type="Pfam" id="PF01966">
    <property type="entry name" value="HD"/>
    <property type="match status" value="1"/>
</dbReference>
<dbReference type="Pfam" id="PF01743">
    <property type="entry name" value="PolyA_pol"/>
    <property type="match status" value="1"/>
</dbReference>
<dbReference type="Pfam" id="PF12627">
    <property type="entry name" value="PolyA_pol_RNAbd"/>
    <property type="match status" value="1"/>
</dbReference>
<dbReference type="PIRSF" id="PIRSF000813">
    <property type="entry name" value="CCA_bact"/>
    <property type="match status" value="1"/>
</dbReference>
<dbReference type="SUPFAM" id="SSF81301">
    <property type="entry name" value="Nucleotidyltransferase"/>
    <property type="match status" value="1"/>
</dbReference>
<dbReference type="SUPFAM" id="SSF81891">
    <property type="entry name" value="Poly A polymerase C-terminal region-like"/>
    <property type="match status" value="1"/>
</dbReference>
<dbReference type="PROSITE" id="PS51831">
    <property type="entry name" value="HD"/>
    <property type="match status" value="1"/>
</dbReference>
<protein>
    <recommendedName>
        <fullName evidence="1">Multifunctional CCA protein</fullName>
    </recommendedName>
    <domain>
        <recommendedName>
            <fullName evidence="1">CCA-adding enzyme</fullName>
            <ecNumber evidence="1">2.7.7.72</ecNumber>
        </recommendedName>
        <alternativeName>
            <fullName evidence="1">CCA tRNA nucleotidyltransferase</fullName>
        </alternativeName>
        <alternativeName>
            <fullName evidence="1">tRNA CCA-pyrophosphorylase</fullName>
        </alternativeName>
        <alternativeName>
            <fullName evidence="1">tRNA adenylyl-/cytidylyl-transferase</fullName>
        </alternativeName>
        <alternativeName>
            <fullName evidence="1">tRNA nucleotidyltransferase</fullName>
        </alternativeName>
        <alternativeName>
            <fullName evidence="1">tRNA-NT</fullName>
        </alternativeName>
    </domain>
    <domain>
        <recommendedName>
            <fullName evidence="1">2'-nucleotidase</fullName>
            <ecNumber evidence="1">3.1.3.-</ecNumber>
        </recommendedName>
    </domain>
    <domain>
        <recommendedName>
            <fullName evidence="1">2',3'-cyclic phosphodiesterase</fullName>
            <ecNumber evidence="1">3.1.4.-</ecNumber>
        </recommendedName>
    </domain>
    <domain>
        <recommendedName>
            <fullName evidence="1">Phosphatase</fullName>
            <ecNumber evidence="1">3.1.3.-</ecNumber>
        </recommendedName>
    </domain>
</protein>
<gene>
    <name evidence="1" type="primary">cca</name>
    <name type="ordered locus">TERTU_3154</name>
</gene>
<feature type="chain" id="PRO_1000214134" description="Multifunctional CCA protein">
    <location>
        <begin position="1"/>
        <end position="411"/>
    </location>
</feature>
<feature type="domain" description="HD" evidence="1">
    <location>
        <begin position="228"/>
        <end position="329"/>
    </location>
</feature>
<feature type="binding site" evidence="1">
    <location>
        <position position="8"/>
    </location>
    <ligand>
        <name>ATP</name>
        <dbReference type="ChEBI" id="CHEBI:30616"/>
    </ligand>
</feature>
<feature type="binding site" evidence="1">
    <location>
        <position position="8"/>
    </location>
    <ligand>
        <name>CTP</name>
        <dbReference type="ChEBI" id="CHEBI:37563"/>
    </ligand>
</feature>
<feature type="binding site" evidence="1">
    <location>
        <position position="11"/>
    </location>
    <ligand>
        <name>ATP</name>
        <dbReference type="ChEBI" id="CHEBI:30616"/>
    </ligand>
</feature>
<feature type="binding site" evidence="1">
    <location>
        <position position="11"/>
    </location>
    <ligand>
        <name>CTP</name>
        <dbReference type="ChEBI" id="CHEBI:37563"/>
    </ligand>
</feature>
<feature type="binding site" evidence="1">
    <location>
        <position position="21"/>
    </location>
    <ligand>
        <name>Mg(2+)</name>
        <dbReference type="ChEBI" id="CHEBI:18420"/>
    </ligand>
</feature>
<feature type="binding site" evidence="1">
    <location>
        <position position="23"/>
    </location>
    <ligand>
        <name>Mg(2+)</name>
        <dbReference type="ChEBI" id="CHEBI:18420"/>
    </ligand>
</feature>
<feature type="binding site" evidence="1">
    <location>
        <position position="91"/>
    </location>
    <ligand>
        <name>ATP</name>
        <dbReference type="ChEBI" id="CHEBI:30616"/>
    </ligand>
</feature>
<feature type="binding site" evidence="1">
    <location>
        <position position="91"/>
    </location>
    <ligand>
        <name>CTP</name>
        <dbReference type="ChEBI" id="CHEBI:37563"/>
    </ligand>
</feature>
<feature type="binding site" evidence="1">
    <location>
        <position position="137"/>
    </location>
    <ligand>
        <name>ATP</name>
        <dbReference type="ChEBI" id="CHEBI:30616"/>
    </ligand>
</feature>
<feature type="binding site" evidence="1">
    <location>
        <position position="137"/>
    </location>
    <ligand>
        <name>CTP</name>
        <dbReference type="ChEBI" id="CHEBI:37563"/>
    </ligand>
</feature>
<feature type="binding site" evidence="1">
    <location>
        <position position="140"/>
    </location>
    <ligand>
        <name>ATP</name>
        <dbReference type="ChEBI" id="CHEBI:30616"/>
    </ligand>
</feature>
<feature type="binding site" evidence="1">
    <location>
        <position position="140"/>
    </location>
    <ligand>
        <name>CTP</name>
        <dbReference type="ChEBI" id="CHEBI:37563"/>
    </ligand>
</feature>
<keyword id="KW-0067">ATP-binding</keyword>
<keyword id="KW-0378">Hydrolase</keyword>
<keyword id="KW-0460">Magnesium</keyword>
<keyword id="KW-0479">Metal-binding</keyword>
<keyword id="KW-0511">Multifunctional enzyme</keyword>
<keyword id="KW-0533">Nickel</keyword>
<keyword id="KW-0547">Nucleotide-binding</keyword>
<keyword id="KW-0548">Nucleotidyltransferase</keyword>
<keyword id="KW-1185">Reference proteome</keyword>
<keyword id="KW-0692">RNA repair</keyword>
<keyword id="KW-0694">RNA-binding</keyword>
<keyword id="KW-0808">Transferase</keyword>
<keyword id="KW-0819">tRNA processing</keyword>
<accession>C5BPQ5</accession>
<sequence length="411" mass="46409">MKIYLVGGAVRDQLLGYPHHEQDWVVVGATPQQMLDAGFKPVGKDFPVFLHPETQEEYALARQERKTAPGYTGFAFHADETVTLEQDLLRRDLTINAIAMDEEGTIIDPYNGKRDIETRTLRHVSQAFCEDPVRILRIARFAARYHHLGFRIAPETLALMRDMVQAGEVDHLVAERVWKELSRALEEQHPAIFIQTLRECGALHRLMPELNALFGIPQPEAHHPEVDTGVHALLALERACELSSTPEVRFAALIHDLGKGVTPKHLWPSHHGHEQDGVALVEQLCNRLSTPNQFRELAVAVCAYHTHCHRAFELNAKTLLKTLLALDGLRRPERFQQFCLCCQADAQGRTGLENRPYPQAAYFLQALEEIQKVDAKMFVAQGKKGAEIGEAMYSARLQKIKLLKTAQTPHE</sequence>
<reference key="1">
    <citation type="journal article" date="2009" name="PLoS ONE">
        <title>The complete genome of Teredinibacter turnerae T7901: an intracellular endosymbiont of marine wood-boring bivalves (shipworms).</title>
        <authorList>
            <person name="Yang J.C."/>
            <person name="Madupu R."/>
            <person name="Durkin A.S."/>
            <person name="Ekborg N.A."/>
            <person name="Pedamallu C.S."/>
            <person name="Hostetler J.B."/>
            <person name="Radune D."/>
            <person name="Toms B.S."/>
            <person name="Henrissat B."/>
            <person name="Coutinho P.M."/>
            <person name="Schwarz S."/>
            <person name="Field L."/>
            <person name="Trindade-Silva A.E."/>
            <person name="Soares C.A.G."/>
            <person name="Elshahawi S."/>
            <person name="Hanora A."/>
            <person name="Schmidt E.W."/>
            <person name="Haygood M.G."/>
            <person name="Posfai J."/>
            <person name="Benner J."/>
            <person name="Madinger C."/>
            <person name="Nove J."/>
            <person name="Anton B."/>
            <person name="Chaudhary K."/>
            <person name="Foster J."/>
            <person name="Holman A."/>
            <person name="Kumar S."/>
            <person name="Lessard P.A."/>
            <person name="Luyten Y.A."/>
            <person name="Slatko B."/>
            <person name="Wood N."/>
            <person name="Wu B."/>
            <person name="Teplitski M."/>
            <person name="Mougous J.D."/>
            <person name="Ward N."/>
            <person name="Eisen J.A."/>
            <person name="Badger J.H."/>
            <person name="Distel D.L."/>
        </authorList>
    </citation>
    <scope>NUCLEOTIDE SEQUENCE [LARGE SCALE GENOMIC DNA]</scope>
    <source>
        <strain>ATCC 39867 / T7901</strain>
    </source>
</reference>